<sequence length="284" mass="30863">MSRPDQAARRRAIAAELHVSPTFDARDEAERRIGFVADYLRTAGLRACVLGISGGIDSSTAGRLAQLAVERLRASGYDARFVAMRLPYGAQHDEADARRALAFVRADETLTVDVKPAADAMLAALAAGGLAYLDHAQQDFVLGNIKARERMIAQYAVAGARNGVVIGTDHAAESVMGFFTKFGDGGADVLPLAGLTKRRVRALARMLGADEPLVLKTPTADLETLRPQRPDEHAYGITYEQIDDFLEGKPMDDAVAETVLRFYDATHHKRALPYTMFDWPGHPA</sequence>
<reference key="1">
    <citation type="journal article" date="2010" name="Genome Biol. Evol.">
        <title>Continuing evolution of Burkholderia mallei through genome reduction and large-scale rearrangements.</title>
        <authorList>
            <person name="Losada L."/>
            <person name="Ronning C.M."/>
            <person name="DeShazer D."/>
            <person name="Woods D."/>
            <person name="Fedorova N."/>
            <person name="Kim H.S."/>
            <person name="Shabalina S.A."/>
            <person name="Pearson T.R."/>
            <person name="Brinkac L."/>
            <person name="Tan P."/>
            <person name="Nandi T."/>
            <person name="Crabtree J."/>
            <person name="Badger J."/>
            <person name="Beckstrom-Sternberg S."/>
            <person name="Saqib M."/>
            <person name="Schutzer S.E."/>
            <person name="Keim P."/>
            <person name="Nierman W.C."/>
        </authorList>
    </citation>
    <scope>NUCLEOTIDE SEQUENCE [LARGE SCALE GENOMIC DNA]</scope>
    <source>
        <strain>NCTC 10247</strain>
    </source>
</reference>
<protein>
    <recommendedName>
        <fullName evidence="1">NH(3)-dependent NAD(+) synthetase</fullName>
        <ecNumber evidence="1">6.3.1.5</ecNumber>
    </recommendedName>
</protein>
<organism>
    <name type="scientific">Burkholderia mallei (strain NCTC 10247)</name>
    <dbReference type="NCBI Taxonomy" id="320389"/>
    <lineage>
        <taxon>Bacteria</taxon>
        <taxon>Pseudomonadati</taxon>
        <taxon>Pseudomonadota</taxon>
        <taxon>Betaproteobacteria</taxon>
        <taxon>Burkholderiales</taxon>
        <taxon>Burkholderiaceae</taxon>
        <taxon>Burkholderia</taxon>
        <taxon>pseudomallei group</taxon>
    </lineage>
</organism>
<feature type="chain" id="PRO_1000099006" description="NH(3)-dependent NAD(+) synthetase">
    <location>
        <begin position="1"/>
        <end position="284"/>
    </location>
</feature>
<feature type="binding site" evidence="1">
    <location>
        <begin position="51"/>
        <end position="58"/>
    </location>
    <ligand>
        <name>ATP</name>
        <dbReference type="ChEBI" id="CHEBI:30616"/>
    </ligand>
</feature>
<feature type="binding site" evidence="1">
    <location>
        <position position="57"/>
    </location>
    <ligand>
        <name>Mg(2+)</name>
        <dbReference type="ChEBI" id="CHEBI:18420"/>
    </ligand>
</feature>
<feature type="binding site" evidence="1">
    <location>
        <position position="148"/>
    </location>
    <ligand>
        <name>deamido-NAD(+)</name>
        <dbReference type="ChEBI" id="CHEBI:58437"/>
    </ligand>
</feature>
<feature type="binding site" evidence="1">
    <location>
        <position position="168"/>
    </location>
    <ligand>
        <name>ATP</name>
        <dbReference type="ChEBI" id="CHEBI:30616"/>
    </ligand>
</feature>
<feature type="binding site" evidence="1">
    <location>
        <position position="173"/>
    </location>
    <ligand>
        <name>Mg(2+)</name>
        <dbReference type="ChEBI" id="CHEBI:18420"/>
    </ligand>
</feature>
<feature type="binding site" evidence="1">
    <location>
        <position position="181"/>
    </location>
    <ligand>
        <name>deamido-NAD(+)</name>
        <dbReference type="ChEBI" id="CHEBI:58437"/>
    </ligand>
</feature>
<feature type="binding site" evidence="1">
    <location>
        <position position="188"/>
    </location>
    <ligand>
        <name>deamido-NAD(+)</name>
        <dbReference type="ChEBI" id="CHEBI:58437"/>
    </ligand>
</feature>
<feature type="binding site" evidence="1">
    <location>
        <position position="197"/>
    </location>
    <ligand>
        <name>ATP</name>
        <dbReference type="ChEBI" id="CHEBI:30616"/>
    </ligand>
</feature>
<feature type="binding site" evidence="1">
    <location>
        <position position="219"/>
    </location>
    <ligand>
        <name>ATP</name>
        <dbReference type="ChEBI" id="CHEBI:30616"/>
    </ligand>
</feature>
<feature type="binding site" evidence="1">
    <location>
        <begin position="268"/>
        <end position="269"/>
    </location>
    <ligand>
        <name>deamido-NAD(+)</name>
        <dbReference type="ChEBI" id="CHEBI:58437"/>
    </ligand>
</feature>
<gene>
    <name evidence="1" type="primary">nadE</name>
    <name type="ordered locus">BMA10247_A1653</name>
</gene>
<keyword id="KW-0067">ATP-binding</keyword>
<keyword id="KW-0436">Ligase</keyword>
<keyword id="KW-0460">Magnesium</keyword>
<keyword id="KW-0479">Metal-binding</keyword>
<keyword id="KW-0520">NAD</keyword>
<keyword id="KW-0547">Nucleotide-binding</keyword>
<proteinExistence type="inferred from homology"/>
<evidence type="ECO:0000255" key="1">
    <source>
        <dbReference type="HAMAP-Rule" id="MF_00193"/>
    </source>
</evidence>
<dbReference type="EC" id="6.3.1.5" evidence="1"/>
<dbReference type="EMBL" id="CP000547">
    <property type="protein sequence ID" value="ABO02609.1"/>
    <property type="molecule type" value="Genomic_DNA"/>
</dbReference>
<dbReference type="RefSeq" id="WP_004201926.1">
    <property type="nucleotide sequence ID" value="NZ_CP007801.1"/>
</dbReference>
<dbReference type="SMR" id="A3MF00"/>
<dbReference type="GeneID" id="92976563"/>
<dbReference type="KEGG" id="bmaz:BM44_4671"/>
<dbReference type="KEGG" id="bmn:BMA10247_A1653"/>
<dbReference type="PATRIC" id="fig|320389.8.peg.5351"/>
<dbReference type="UniPathway" id="UPA00253">
    <property type="reaction ID" value="UER00333"/>
</dbReference>
<dbReference type="GO" id="GO:0005737">
    <property type="term" value="C:cytoplasm"/>
    <property type="evidence" value="ECO:0007669"/>
    <property type="project" value="InterPro"/>
</dbReference>
<dbReference type="GO" id="GO:0005524">
    <property type="term" value="F:ATP binding"/>
    <property type="evidence" value="ECO:0007669"/>
    <property type="project" value="UniProtKB-UniRule"/>
</dbReference>
<dbReference type="GO" id="GO:0004359">
    <property type="term" value="F:glutaminase activity"/>
    <property type="evidence" value="ECO:0007669"/>
    <property type="project" value="InterPro"/>
</dbReference>
<dbReference type="GO" id="GO:0046872">
    <property type="term" value="F:metal ion binding"/>
    <property type="evidence" value="ECO:0007669"/>
    <property type="project" value="UniProtKB-KW"/>
</dbReference>
<dbReference type="GO" id="GO:0003952">
    <property type="term" value="F:NAD+ synthase (glutamine-hydrolyzing) activity"/>
    <property type="evidence" value="ECO:0007669"/>
    <property type="project" value="InterPro"/>
</dbReference>
<dbReference type="GO" id="GO:0008795">
    <property type="term" value="F:NAD+ synthase activity"/>
    <property type="evidence" value="ECO:0007669"/>
    <property type="project" value="UniProtKB-UniRule"/>
</dbReference>
<dbReference type="GO" id="GO:0009435">
    <property type="term" value="P:NAD biosynthetic process"/>
    <property type="evidence" value="ECO:0007669"/>
    <property type="project" value="UniProtKB-UniRule"/>
</dbReference>
<dbReference type="CDD" id="cd00553">
    <property type="entry name" value="NAD_synthase"/>
    <property type="match status" value="1"/>
</dbReference>
<dbReference type="Gene3D" id="3.40.50.620">
    <property type="entry name" value="HUPs"/>
    <property type="match status" value="1"/>
</dbReference>
<dbReference type="HAMAP" id="MF_00193">
    <property type="entry name" value="NadE_ammonia_dep"/>
    <property type="match status" value="1"/>
</dbReference>
<dbReference type="InterPro" id="IPR022310">
    <property type="entry name" value="NAD/GMP_synthase"/>
</dbReference>
<dbReference type="InterPro" id="IPR003694">
    <property type="entry name" value="NAD_synthase"/>
</dbReference>
<dbReference type="InterPro" id="IPR022926">
    <property type="entry name" value="NH(3)-dep_NAD(+)_synth"/>
</dbReference>
<dbReference type="InterPro" id="IPR014729">
    <property type="entry name" value="Rossmann-like_a/b/a_fold"/>
</dbReference>
<dbReference type="NCBIfam" id="TIGR00552">
    <property type="entry name" value="nadE"/>
    <property type="match status" value="1"/>
</dbReference>
<dbReference type="NCBIfam" id="NF001979">
    <property type="entry name" value="PRK00768.1"/>
    <property type="match status" value="1"/>
</dbReference>
<dbReference type="PANTHER" id="PTHR23090">
    <property type="entry name" value="NH 3 /GLUTAMINE-DEPENDENT NAD + SYNTHETASE"/>
    <property type="match status" value="1"/>
</dbReference>
<dbReference type="PANTHER" id="PTHR23090:SF7">
    <property type="entry name" value="NH(3)-DEPENDENT NAD(+) SYNTHETASE"/>
    <property type="match status" value="1"/>
</dbReference>
<dbReference type="Pfam" id="PF02540">
    <property type="entry name" value="NAD_synthase"/>
    <property type="match status" value="1"/>
</dbReference>
<dbReference type="SUPFAM" id="SSF52402">
    <property type="entry name" value="Adenine nucleotide alpha hydrolases-like"/>
    <property type="match status" value="1"/>
</dbReference>
<name>NADE_BURM7</name>
<accession>A3MF00</accession>
<comment type="function">
    <text evidence="1">Catalyzes the ATP-dependent amidation of deamido-NAD to form NAD. Uses ammonia as a nitrogen source.</text>
</comment>
<comment type="catalytic activity">
    <reaction evidence="1">
        <text>deamido-NAD(+) + NH4(+) + ATP = AMP + diphosphate + NAD(+) + H(+)</text>
        <dbReference type="Rhea" id="RHEA:21188"/>
        <dbReference type="ChEBI" id="CHEBI:15378"/>
        <dbReference type="ChEBI" id="CHEBI:28938"/>
        <dbReference type="ChEBI" id="CHEBI:30616"/>
        <dbReference type="ChEBI" id="CHEBI:33019"/>
        <dbReference type="ChEBI" id="CHEBI:57540"/>
        <dbReference type="ChEBI" id="CHEBI:58437"/>
        <dbReference type="ChEBI" id="CHEBI:456215"/>
        <dbReference type="EC" id="6.3.1.5"/>
    </reaction>
</comment>
<comment type="pathway">
    <text evidence="1">Cofactor biosynthesis; NAD(+) biosynthesis; NAD(+) from deamido-NAD(+) (ammonia route): step 1/1.</text>
</comment>
<comment type="subunit">
    <text evidence="1">Homodimer.</text>
</comment>
<comment type="similarity">
    <text evidence="1">Belongs to the NAD synthetase family.</text>
</comment>